<comment type="function">
    <text evidence="1">Non-catalytic component of the exosome, which is a complex involved in RNA degradation. Contributes to the structuring of the Rrp41 active site.</text>
</comment>
<comment type="subunit">
    <text evidence="1">Component of the archaeal exosome complex. Forms a hexameric ring-like arrangement composed of 3 Rrp41-Rrp42 heterodimers. The hexameric ring associates with a trimer of Rrp4 and/or Csl4 subunits.</text>
</comment>
<comment type="subcellular location">
    <subcellularLocation>
        <location evidence="1">Cytoplasm</location>
    </subcellularLocation>
</comment>
<comment type="similarity">
    <text evidence="1">Belongs to the RNase PH family. Rrp42 subfamily.</text>
</comment>
<protein>
    <recommendedName>
        <fullName evidence="1">Exosome complex component Rrp42</fullName>
    </recommendedName>
</protein>
<dbReference type="EMBL" id="AJ248284">
    <property type="protein sequence ID" value="CAB49533.1"/>
    <property type="molecule type" value="Genomic_DNA"/>
</dbReference>
<dbReference type="EMBL" id="HE613800">
    <property type="protein sequence ID" value="CCE70003.1"/>
    <property type="molecule type" value="Genomic_DNA"/>
</dbReference>
<dbReference type="PIR" id="F75181">
    <property type="entry name" value="F75181"/>
</dbReference>
<dbReference type="RefSeq" id="WP_010867735.1">
    <property type="nucleotide sequence ID" value="NC_000868.1"/>
</dbReference>
<dbReference type="PDB" id="2PNZ">
    <property type="method" value="X-ray"/>
    <property type="resolution" value="2.14 A"/>
    <property type="chains" value="B=1-274"/>
</dbReference>
<dbReference type="PDB" id="2PO0">
    <property type="method" value="X-ray"/>
    <property type="resolution" value="2.30 A"/>
    <property type="chains" value="B=1-274"/>
</dbReference>
<dbReference type="PDB" id="2PO1">
    <property type="method" value="X-ray"/>
    <property type="resolution" value="1.94 A"/>
    <property type="chains" value="B=1-274"/>
</dbReference>
<dbReference type="PDB" id="2PO2">
    <property type="method" value="X-ray"/>
    <property type="resolution" value="2.41 A"/>
    <property type="chains" value="B=1-274"/>
</dbReference>
<dbReference type="PDBsum" id="2PNZ"/>
<dbReference type="PDBsum" id="2PO0"/>
<dbReference type="PDBsum" id="2PO1"/>
<dbReference type="PDBsum" id="2PO2"/>
<dbReference type="SMR" id="Q9V118"/>
<dbReference type="STRING" id="272844.PAB0421"/>
<dbReference type="KEGG" id="pab:PAB0421"/>
<dbReference type="PATRIC" id="fig|272844.11.peg.649"/>
<dbReference type="eggNOG" id="arCOG01574">
    <property type="taxonomic scope" value="Archaea"/>
</dbReference>
<dbReference type="HOGENOM" id="CLU_038194_0_0_2"/>
<dbReference type="OrthoDB" id="30932at2157"/>
<dbReference type="PhylomeDB" id="Q9V118"/>
<dbReference type="EvolutionaryTrace" id="Q9V118"/>
<dbReference type="Proteomes" id="UP000000810">
    <property type="component" value="Chromosome"/>
</dbReference>
<dbReference type="Proteomes" id="UP000009139">
    <property type="component" value="Chromosome"/>
</dbReference>
<dbReference type="GO" id="GO:0000177">
    <property type="term" value="C:cytoplasmic exosome (RNase complex)"/>
    <property type="evidence" value="ECO:0007669"/>
    <property type="project" value="TreeGrafter"/>
</dbReference>
<dbReference type="GO" id="GO:0035925">
    <property type="term" value="F:mRNA 3'-UTR AU-rich region binding"/>
    <property type="evidence" value="ECO:0007669"/>
    <property type="project" value="TreeGrafter"/>
</dbReference>
<dbReference type="GO" id="GO:0016075">
    <property type="term" value="P:rRNA catabolic process"/>
    <property type="evidence" value="ECO:0007669"/>
    <property type="project" value="TreeGrafter"/>
</dbReference>
<dbReference type="CDD" id="cd11365">
    <property type="entry name" value="RNase_PH_archRRP42"/>
    <property type="match status" value="1"/>
</dbReference>
<dbReference type="FunFam" id="3.30.230.70:FF:000017">
    <property type="entry name" value="Exosome complex component Rrp42"/>
    <property type="match status" value="1"/>
</dbReference>
<dbReference type="Gene3D" id="3.30.230.70">
    <property type="entry name" value="GHMP Kinase, N-terminal domain"/>
    <property type="match status" value="1"/>
</dbReference>
<dbReference type="HAMAP" id="MF_00622">
    <property type="entry name" value="Exosome_Rrp42"/>
    <property type="match status" value="1"/>
</dbReference>
<dbReference type="InterPro" id="IPR001247">
    <property type="entry name" value="ExoRNase_PH_dom1"/>
</dbReference>
<dbReference type="InterPro" id="IPR015847">
    <property type="entry name" value="ExoRNase_PH_dom2"/>
</dbReference>
<dbReference type="InterPro" id="IPR036345">
    <property type="entry name" value="ExoRNase_PH_dom2_sf"/>
</dbReference>
<dbReference type="InterPro" id="IPR050590">
    <property type="entry name" value="Exosome_comp_Rrp42_subfam"/>
</dbReference>
<dbReference type="InterPro" id="IPR027408">
    <property type="entry name" value="PNPase/RNase_PH_dom_sf"/>
</dbReference>
<dbReference type="InterPro" id="IPR020568">
    <property type="entry name" value="Ribosomal_Su5_D2-typ_SF"/>
</dbReference>
<dbReference type="InterPro" id="IPR020869">
    <property type="entry name" value="Rrp42_archaea"/>
</dbReference>
<dbReference type="NCBIfam" id="NF003282">
    <property type="entry name" value="PRK04282.1-1"/>
    <property type="match status" value="1"/>
</dbReference>
<dbReference type="PANTHER" id="PTHR11097:SF8">
    <property type="entry name" value="EXOSOME COMPLEX COMPONENT RRP42"/>
    <property type="match status" value="1"/>
</dbReference>
<dbReference type="PANTHER" id="PTHR11097">
    <property type="entry name" value="EXOSOME COMPLEX EXONUCLEASE RIBOSOMAL RNA PROCESSING PROTEIN"/>
    <property type="match status" value="1"/>
</dbReference>
<dbReference type="Pfam" id="PF01138">
    <property type="entry name" value="RNase_PH"/>
    <property type="match status" value="1"/>
</dbReference>
<dbReference type="Pfam" id="PF03725">
    <property type="entry name" value="RNase_PH_C"/>
    <property type="match status" value="1"/>
</dbReference>
<dbReference type="SUPFAM" id="SSF55666">
    <property type="entry name" value="Ribonuclease PH domain 2-like"/>
    <property type="match status" value="1"/>
</dbReference>
<dbReference type="SUPFAM" id="SSF54211">
    <property type="entry name" value="Ribosomal protein S5 domain 2-like"/>
    <property type="match status" value="1"/>
</dbReference>
<gene>
    <name evidence="1" type="primary">rrp42</name>
    <name type="ordered locus">PYRAB06110</name>
    <name type="ORF">PAB0421</name>
</gene>
<sequence length="274" mass="29952">MSDNEIVAGIMRDHIINLLKEGKRIDDRGFEDYRPIEIEVGVIEKAEGSALVKLGSTQVLVGIKTSLGEPFPDTPNMGVMTTNVELVPLASPTFEPGPPDERAIELARVIDRGIRESKALNLEKMVIVPGKIVRVVFIDVHVLDHDGNLMDAIGIAAIAALLNARVPKVRYNEETGEVETLDETEPLPVEKIPVPVTFAKIGNILVVDPSLDEELVMDGKITITTDETGHISAVQKSEGGAFKLEEVMYAVETAFKKAEEIRKLILEAVEKAKQ</sequence>
<proteinExistence type="evidence at protein level"/>
<evidence type="ECO:0000255" key="1">
    <source>
        <dbReference type="HAMAP-Rule" id="MF_00622"/>
    </source>
</evidence>
<evidence type="ECO:0000269" key="2">
    <source>
    </source>
</evidence>
<evidence type="ECO:0007829" key="3">
    <source>
        <dbReference type="PDB" id="2PO1"/>
    </source>
</evidence>
<keyword id="KW-0002">3D-structure</keyword>
<keyword id="KW-0963">Cytoplasm</keyword>
<keyword id="KW-0271">Exosome</keyword>
<organism>
    <name type="scientific">Pyrococcus abyssi (strain GE5 / Orsay)</name>
    <dbReference type="NCBI Taxonomy" id="272844"/>
    <lineage>
        <taxon>Archaea</taxon>
        <taxon>Methanobacteriati</taxon>
        <taxon>Methanobacteriota</taxon>
        <taxon>Thermococci</taxon>
        <taxon>Thermococcales</taxon>
        <taxon>Thermococcaceae</taxon>
        <taxon>Pyrococcus</taxon>
    </lineage>
</organism>
<feature type="chain" id="PRO_0000140001" description="Exosome complex component Rrp42">
    <location>
        <begin position="1"/>
        <end position="274"/>
    </location>
</feature>
<feature type="mutagenesis site" description="Does not affect ring assembly, but decreases RNA degradation." evidence="2">
    <original>K</original>
    <variation>A</variation>
    <location>
        <position position="45"/>
    </location>
</feature>
<feature type="helix" evidence="3">
    <location>
        <begin position="10"/>
        <end position="20"/>
    </location>
</feature>
<feature type="strand" evidence="3">
    <location>
        <begin position="36"/>
        <end position="40"/>
    </location>
</feature>
<feature type="strand" evidence="3">
    <location>
        <begin position="46"/>
        <end position="54"/>
    </location>
</feature>
<feature type="strand" evidence="3">
    <location>
        <begin position="57"/>
        <end position="68"/>
    </location>
</feature>
<feature type="strand" evidence="3">
    <location>
        <begin position="79"/>
        <end position="86"/>
    </location>
</feature>
<feature type="helix" evidence="3">
    <location>
        <begin position="88"/>
        <end position="90"/>
    </location>
</feature>
<feature type="strand" evidence="3">
    <location>
        <begin position="96"/>
        <end position="98"/>
    </location>
</feature>
<feature type="helix" evidence="3">
    <location>
        <begin position="101"/>
        <end position="115"/>
    </location>
</feature>
<feature type="turn" evidence="3">
    <location>
        <begin position="116"/>
        <end position="118"/>
    </location>
</feature>
<feature type="helix" evidence="3">
    <location>
        <begin position="122"/>
        <end position="125"/>
    </location>
</feature>
<feature type="strand" evidence="3">
    <location>
        <begin position="126"/>
        <end position="128"/>
    </location>
</feature>
<feature type="turn" evidence="3">
    <location>
        <begin position="129"/>
        <end position="131"/>
    </location>
</feature>
<feature type="strand" evidence="3">
    <location>
        <begin position="132"/>
        <end position="144"/>
    </location>
</feature>
<feature type="helix" evidence="3">
    <location>
        <begin position="149"/>
        <end position="163"/>
    </location>
</feature>
<feature type="strand" evidence="3">
    <location>
        <begin position="165"/>
        <end position="171"/>
    </location>
</feature>
<feature type="turn" evidence="3">
    <location>
        <begin position="173"/>
        <end position="175"/>
    </location>
</feature>
<feature type="strand" evidence="3">
    <location>
        <begin position="178"/>
        <end position="186"/>
    </location>
</feature>
<feature type="strand" evidence="3">
    <location>
        <begin position="194"/>
        <end position="201"/>
    </location>
</feature>
<feature type="strand" evidence="3">
    <location>
        <begin position="204"/>
        <end position="208"/>
    </location>
</feature>
<feature type="helix" evidence="3">
    <location>
        <begin position="211"/>
        <end position="216"/>
    </location>
</feature>
<feature type="strand" evidence="3">
    <location>
        <begin position="218"/>
        <end position="225"/>
    </location>
</feature>
<feature type="strand" evidence="3">
    <location>
        <begin position="231"/>
        <end position="239"/>
    </location>
</feature>
<feature type="helix" evidence="3">
    <location>
        <begin position="244"/>
        <end position="272"/>
    </location>
</feature>
<reference key="1">
    <citation type="journal article" date="2003" name="Mol. Microbiol.">
        <title>An integrated analysis of the genome of the hyperthermophilic archaeon Pyrococcus abyssi.</title>
        <authorList>
            <person name="Cohen G.N."/>
            <person name="Barbe V."/>
            <person name="Flament D."/>
            <person name="Galperin M."/>
            <person name="Heilig R."/>
            <person name="Lecompte O."/>
            <person name="Poch O."/>
            <person name="Prieur D."/>
            <person name="Querellou J."/>
            <person name="Ripp R."/>
            <person name="Thierry J.-C."/>
            <person name="Van der Oost J."/>
            <person name="Weissenbach J."/>
            <person name="Zivanovic Y."/>
            <person name="Forterre P."/>
        </authorList>
    </citation>
    <scope>NUCLEOTIDE SEQUENCE [LARGE SCALE GENOMIC DNA]</scope>
    <source>
        <strain>GE5 / Orsay</strain>
    </source>
</reference>
<reference key="2">
    <citation type="journal article" date="2012" name="Curr. Microbiol.">
        <title>Re-annotation of two hyperthermophilic archaea Pyrococcus abyssi GE5 and Pyrococcus furiosus DSM 3638.</title>
        <authorList>
            <person name="Gao J."/>
            <person name="Wang J."/>
        </authorList>
    </citation>
    <scope>GENOME REANNOTATION</scope>
    <source>
        <strain>GE5 / Orsay</strain>
    </source>
</reference>
<reference key="3">
    <citation type="journal article" date="2008" name="J. Biol. Chem.">
        <title>Insights into the mechanism of progressive RNA degradation by the archaeal exosome.</title>
        <authorList>
            <person name="Navarro M.V."/>
            <person name="Oliveira C.C."/>
            <person name="Zanchin N.I."/>
            <person name="Guimaraes B.G."/>
        </authorList>
    </citation>
    <scope>X-RAY CRYSTALLOGRAPHY (1.94 ANGSTROMS) IN COMPLEX WITH RRP41</scope>
    <scope>MUTAGENESIS OF LYS-45</scope>
</reference>
<name>RRP42_PYRAB</name>
<accession>Q9V118</accession>
<accession>G8ZJ76</accession>